<evidence type="ECO:0000255" key="1">
    <source>
        <dbReference type="HAMAP-Rule" id="MF_00087"/>
    </source>
</evidence>
<protein>
    <recommendedName>
        <fullName evidence="1">Glutamyl-tRNA reductase</fullName>
        <shortName evidence="1">GluTR</shortName>
        <ecNumber evidence="1">1.2.1.70</ecNumber>
    </recommendedName>
</protein>
<name>HEM1_CHLPN</name>
<dbReference type="EC" id="1.2.1.70" evidence="1"/>
<dbReference type="EMBL" id="AE001363">
    <property type="protein sequence ID" value="AAD18853.1"/>
    <property type="molecule type" value="Genomic_DNA"/>
</dbReference>
<dbReference type="EMBL" id="AE002161">
    <property type="protein sequence ID" value="AAF37927.1"/>
    <property type="molecule type" value="Genomic_DNA"/>
</dbReference>
<dbReference type="EMBL" id="BA000008">
    <property type="protein sequence ID" value="BAA98921.1"/>
    <property type="molecule type" value="Genomic_DNA"/>
</dbReference>
<dbReference type="EMBL" id="AE009440">
    <property type="protein sequence ID" value="AAP98670.1"/>
    <property type="molecule type" value="Genomic_DNA"/>
</dbReference>
<dbReference type="PIR" id="B72043">
    <property type="entry name" value="B72043"/>
</dbReference>
<dbReference type="PIR" id="G86579">
    <property type="entry name" value="G86579"/>
</dbReference>
<dbReference type="RefSeq" id="NP_224910.1">
    <property type="nucleotide sequence ID" value="NC_000922.1"/>
</dbReference>
<dbReference type="RefSeq" id="WP_010883352.1">
    <property type="nucleotide sequence ID" value="NZ_LN847221.1"/>
</dbReference>
<dbReference type="SMR" id="Q9Z7J1"/>
<dbReference type="STRING" id="406984.CPK_ORF00118"/>
<dbReference type="GeneID" id="45050769"/>
<dbReference type="KEGG" id="cpa:CP_0032"/>
<dbReference type="KEGG" id="cpj:hemA"/>
<dbReference type="KEGG" id="cpn:CPn_0714"/>
<dbReference type="KEGG" id="cpt:CpB0741"/>
<dbReference type="PATRIC" id="fig|115713.3.peg.789"/>
<dbReference type="eggNOG" id="COG0373">
    <property type="taxonomic scope" value="Bacteria"/>
</dbReference>
<dbReference type="HOGENOM" id="CLU_035113_3_1_0"/>
<dbReference type="OrthoDB" id="110209at2"/>
<dbReference type="UniPathway" id="UPA00251">
    <property type="reaction ID" value="UER00316"/>
</dbReference>
<dbReference type="Proteomes" id="UP000000583">
    <property type="component" value="Chromosome"/>
</dbReference>
<dbReference type="Proteomes" id="UP000000801">
    <property type="component" value="Chromosome"/>
</dbReference>
<dbReference type="GO" id="GO:0008883">
    <property type="term" value="F:glutamyl-tRNA reductase activity"/>
    <property type="evidence" value="ECO:0007669"/>
    <property type="project" value="UniProtKB-UniRule"/>
</dbReference>
<dbReference type="GO" id="GO:0050661">
    <property type="term" value="F:NADP binding"/>
    <property type="evidence" value="ECO:0007669"/>
    <property type="project" value="InterPro"/>
</dbReference>
<dbReference type="GO" id="GO:0006782">
    <property type="term" value="P:protoporphyrinogen IX biosynthetic process"/>
    <property type="evidence" value="ECO:0007669"/>
    <property type="project" value="UniProtKB-UniRule"/>
</dbReference>
<dbReference type="Gene3D" id="3.30.460.30">
    <property type="entry name" value="Glutamyl-tRNA reductase, N-terminal domain"/>
    <property type="match status" value="1"/>
</dbReference>
<dbReference type="HAMAP" id="MF_00087">
    <property type="entry name" value="Glu_tRNA_reductase"/>
    <property type="match status" value="1"/>
</dbReference>
<dbReference type="InterPro" id="IPR000343">
    <property type="entry name" value="4pyrrol_synth_GluRdtase"/>
</dbReference>
<dbReference type="InterPro" id="IPR015895">
    <property type="entry name" value="4pyrrol_synth_GluRdtase_N"/>
</dbReference>
<dbReference type="InterPro" id="IPR018214">
    <property type="entry name" value="GluRdtase_CS"/>
</dbReference>
<dbReference type="InterPro" id="IPR036343">
    <property type="entry name" value="GluRdtase_N_sf"/>
</dbReference>
<dbReference type="NCBIfam" id="NF001909">
    <property type="entry name" value="PRK00676.1"/>
    <property type="match status" value="1"/>
</dbReference>
<dbReference type="PANTHER" id="PTHR43120">
    <property type="entry name" value="GLUTAMYL-TRNA REDUCTASE 1, CHLOROPLASTIC"/>
    <property type="match status" value="1"/>
</dbReference>
<dbReference type="PANTHER" id="PTHR43120:SF1">
    <property type="entry name" value="GLUTAMYL-TRNA REDUCTASE 1, CHLOROPLASTIC"/>
    <property type="match status" value="1"/>
</dbReference>
<dbReference type="Pfam" id="PF05201">
    <property type="entry name" value="GlutR_N"/>
    <property type="match status" value="1"/>
</dbReference>
<dbReference type="SUPFAM" id="SSF69742">
    <property type="entry name" value="Glutamyl tRNA-reductase catalytic, N-terminal domain"/>
    <property type="match status" value="1"/>
</dbReference>
<dbReference type="PROSITE" id="PS00747">
    <property type="entry name" value="GLUTR"/>
    <property type="match status" value="1"/>
</dbReference>
<proteinExistence type="inferred from homology"/>
<feature type="chain" id="PRO_0000114006" description="Glutamyl-tRNA reductase">
    <location>
        <begin position="1"/>
        <end position="339"/>
    </location>
</feature>
<feature type="active site" description="Nucleophile" evidence="1">
    <location>
        <position position="51"/>
    </location>
</feature>
<feature type="binding site" evidence="1">
    <location>
        <begin position="50"/>
        <end position="53"/>
    </location>
    <ligand>
        <name>substrate</name>
    </ligand>
</feature>
<feature type="binding site" evidence="1">
    <location>
        <position position="102"/>
    </location>
    <ligand>
        <name>substrate</name>
    </ligand>
</feature>
<feature type="binding site" evidence="1">
    <location>
        <begin position="107"/>
        <end position="109"/>
    </location>
    <ligand>
        <name>substrate</name>
    </ligand>
</feature>
<feature type="binding site" evidence="1">
    <location>
        <position position="113"/>
    </location>
    <ligand>
        <name>substrate</name>
    </ligand>
</feature>
<feature type="binding site" evidence="1">
    <location>
        <begin position="181"/>
        <end position="186"/>
    </location>
    <ligand>
        <name>NADP(+)</name>
        <dbReference type="ChEBI" id="CHEBI:58349"/>
    </ligand>
</feature>
<feature type="site" description="Important for activity" evidence="1">
    <location>
        <position position="92"/>
    </location>
</feature>
<reference key="1">
    <citation type="journal article" date="1999" name="Nat. Genet.">
        <title>Comparative genomes of Chlamydia pneumoniae and C. trachomatis.</title>
        <authorList>
            <person name="Kalman S."/>
            <person name="Mitchell W.P."/>
            <person name="Marathe R."/>
            <person name="Lammel C.J."/>
            <person name="Fan J."/>
            <person name="Hyman R.W."/>
            <person name="Olinger L."/>
            <person name="Grimwood J."/>
            <person name="Davis R.W."/>
            <person name="Stephens R.S."/>
        </authorList>
    </citation>
    <scope>NUCLEOTIDE SEQUENCE [LARGE SCALE GENOMIC DNA]</scope>
    <source>
        <strain>CWL029</strain>
    </source>
</reference>
<reference key="2">
    <citation type="journal article" date="2000" name="Nucleic Acids Res.">
        <title>Genome sequences of Chlamydia trachomatis MoPn and Chlamydia pneumoniae AR39.</title>
        <authorList>
            <person name="Read T.D."/>
            <person name="Brunham R.C."/>
            <person name="Shen C."/>
            <person name="Gill S.R."/>
            <person name="Heidelberg J.F."/>
            <person name="White O."/>
            <person name="Hickey E.K."/>
            <person name="Peterson J.D."/>
            <person name="Utterback T.R."/>
            <person name="Berry K.J."/>
            <person name="Bass S."/>
            <person name="Linher K.D."/>
            <person name="Weidman J.F."/>
            <person name="Khouri H.M."/>
            <person name="Craven B."/>
            <person name="Bowman C."/>
            <person name="Dodson R.J."/>
            <person name="Gwinn M.L."/>
            <person name="Nelson W.C."/>
            <person name="DeBoy R.T."/>
            <person name="Kolonay J.F."/>
            <person name="McClarty G."/>
            <person name="Salzberg S.L."/>
            <person name="Eisen J.A."/>
            <person name="Fraser C.M."/>
        </authorList>
    </citation>
    <scope>NUCLEOTIDE SEQUENCE [LARGE SCALE GENOMIC DNA]</scope>
    <source>
        <strain>AR39</strain>
    </source>
</reference>
<reference key="3">
    <citation type="journal article" date="2000" name="Nucleic Acids Res.">
        <title>Comparison of whole genome sequences of Chlamydia pneumoniae J138 from Japan and CWL029 from USA.</title>
        <authorList>
            <person name="Shirai M."/>
            <person name="Hirakawa H."/>
            <person name="Kimoto M."/>
            <person name="Tabuchi M."/>
            <person name="Kishi F."/>
            <person name="Ouchi K."/>
            <person name="Shiba T."/>
            <person name="Ishii K."/>
            <person name="Hattori M."/>
            <person name="Kuhara S."/>
            <person name="Nakazawa T."/>
        </authorList>
    </citation>
    <scope>NUCLEOTIDE SEQUENCE [LARGE SCALE GENOMIC DNA]</scope>
    <source>
        <strain>J138</strain>
    </source>
</reference>
<reference key="4">
    <citation type="submission" date="2002-05" db="EMBL/GenBank/DDBJ databases">
        <title>The genome sequence of Chlamydia pneumoniae TW183 and comparison with other Chlamydia strains based on whole genome sequence analysis.</title>
        <authorList>
            <person name="Geng M.M."/>
            <person name="Schuhmacher A."/>
            <person name="Muehldorfer I."/>
            <person name="Bensch K.W."/>
            <person name="Schaefer K.P."/>
            <person name="Schneider S."/>
            <person name="Pohl T."/>
            <person name="Essig A."/>
            <person name="Marre R."/>
            <person name="Melchers K."/>
        </authorList>
    </citation>
    <scope>NUCLEOTIDE SEQUENCE [LARGE SCALE GENOMIC DNA]</scope>
    <source>
        <strain>TW-183</strain>
    </source>
</reference>
<keyword id="KW-0521">NADP</keyword>
<keyword id="KW-0560">Oxidoreductase</keyword>
<keyword id="KW-0627">Porphyrin biosynthesis</keyword>
<organism>
    <name type="scientific">Chlamydia pneumoniae</name>
    <name type="common">Chlamydophila pneumoniae</name>
    <dbReference type="NCBI Taxonomy" id="83558"/>
    <lineage>
        <taxon>Bacteria</taxon>
        <taxon>Pseudomonadati</taxon>
        <taxon>Chlamydiota</taxon>
        <taxon>Chlamydiia</taxon>
        <taxon>Chlamydiales</taxon>
        <taxon>Chlamydiaceae</taxon>
        <taxon>Chlamydia/Chlamydophila group</taxon>
        <taxon>Chlamydia</taxon>
    </lineage>
</organism>
<sequence>MVLGVVGISYREAALKERERAIQYLQSFEKNLFLAQRFLGKGGAFIPLLTCHRAELYYYSESPEIAQAALLSELTSQGIRPYRHRGLSCFTHLFQVTSGIDSLIFGETEIQGQVKRAYLKGSKERELPFDLHFLFQKALKEGKEYRSRIGFPDHQVTIESVVQEILLSYDKSIYTNFLFVGYSDINRKVAAYLYQHGYHRITFCSRQQVTAPYRTLSRETLSFRQPYDVIFFGSSESASQFSDLSCESLASIPKRIVFDFNVPRTFLWKETPTGFVYLDIDFISECVQKRLQCTKEGVNKAKLLLTCAAKKQWEIYEKKSSHITQRQISSPRIPSVLSY</sequence>
<comment type="function">
    <text evidence="1">Catalyzes the NADPH-dependent reduction of glutamyl-tRNA(Glu) to glutamate 1-semialdehyde (GSA).</text>
</comment>
<comment type="catalytic activity">
    <reaction evidence="1">
        <text>(S)-4-amino-5-oxopentanoate + tRNA(Glu) + NADP(+) = L-glutamyl-tRNA(Glu) + NADPH + H(+)</text>
        <dbReference type="Rhea" id="RHEA:12344"/>
        <dbReference type="Rhea" id="RHEA-COMP:9663"/>
        <dbReference type="Rhea" id="RHEA-COMP:9680"/>
        <dbReference type="ChEBI" id="CHEBI:15378"/>
        <dbReference type="ChEBI" id="CHEBI:57501"/>
        <dbReference type="ChEBI" id="CHEBI:57783"/>
        <dbReference type="ChEBI" id="CHEBI:58349"/>
        <dbReference type="ChEBI" id="CHEBI:78442"/>
        <dbReference type="ChEBI" id="CHEBI:78520"/>
        <dbReference type="EC" id="1.2.1.70"/>
    </reaction>
</comment>
<comment type="pathway">
    <text evidence="1">Porphyrin-containing compound metabolism; protoporphyrin-IX biosynthesis; 5-aminolevulinate from L-glutamyl-tRNA(Glu): step 1/2.</text>
</comment>
<comment type="subunit">
    <text evidence="1">Homodimer.</text>
</comment>
<comment type="domain">
    <text evidence="1">Possesses an unusual extended V-shaped dimeric structure with each monomer consisting of three distinct domains arranged along a curved 'spinal' alpha-helix. The N-terminal catalytic domain specifically recognizes the glutamate moiety of the substrate. The second domain is the NADPH-binding domain, and the third C-terminal domain is responsible for dimerization.</text>
</comment>
<comment type="miscellaneous">
    <text evidence="1">During catalysis, the active site Cys acts as a nucleophile attacking the alpha-carbonyl group of tRNA-bound glutamate with the formation of a thioester intermediate between enzyme and glutamate, and the concomitant release of tRNA(Glu). The thioester intermediate is finally reduced by direct hydride transfer from NADPH, to form the product GSA.</text>
</comment>
<comment type="similarity">
    <text evidence="1">Belongs to the glutamyl-tRNA reductase family.</text>
</comment>
<accession>Q9Z7J1</accession>
<accession>Q9JQF2</accession>
<gene>
    <name evidence="1" type="primary">hemA</name>
    <name type="ordered locus">CPn_0714</name>
    <name type="ordered locus">CP_0032</name>
    <name type="ordered locus">CpB0741</name>
</gene>